<sequence>MNKFAIVLAAGKGTRMKSALPKVLHQVAGKSMLAHVLKSVSEVEIAKNVVIVGHEADRVIATLPKGTQFVKQVEQLGTGHAVRIAADLLANEEGATLVIAGDTPLITGETLGALFDYHFAQKATATILTAIAPNPTGYGRIIRDEKDSVEKIVEQKDANAFEKSITEINTGTYIFDNKSLFKALTEITTDNAQGEYYLTDVIEIFKKVGQTIAAHILDDFDESLGVNDRVALSQAEATMRKRINHEHMVNGVTLIDPATTYIDSEVTIGAETVIEANVTIKGNTFIGKNVLITNGSRIENSEIHSNCEVRNSTVEESRMSVGSNVGPYAHLRPGTVLSEEVHVGNFVEIKGSTLGKGTKAGHLTYIGNATVGEKVNFGAGTITANFDGKNKFNTEIDDFAFIGSNSTIIAPLHIGKNALTAAGSVVTEDVPDEAVEIGRGKQVNKLGRAKKMPHYRGQ</sequence>
<proteinExistence type="inferred from homology"/>
<feature type="chain" id="PRO_1000056169" description="Bifunctional protein GlmU">
    <location>
        <begin position="1"/>
        <end position="458"/>
    </location>
</feature>
<feature type="region of interest" description="Pyrophosphorylase" evidence="1">
    <location>
        <begin position="1"/>
        <end position="229"/>
    </location>
</feature>
<feature type="region of interest" description="Linker" evidence="1">
    <location>
        <begin position="230"/>
        <end position="250"/>
    </location>
</feature>
<feature type="region of interest" description="N-acetyltransferase" evidence="1">
    <location>
        <begin position="251"/>
        <end position="458"/>
    </location>
</feature>
<feature type="active site" description="Proton acceptor" evidence="1">
    <location>
        <position position="362"/>
    </location>
</feature>
<feature type="binding site" evidence="1">
    <location>
        <begin position="8"/>
        <end position="11"/>
    </location>
    <ligand>
        <name>UDP-N-acetyl-alpha-D-glucosamine</name>
        <dbReference type="ChEBI" id="CHEBI:57705"/>
    </ligand>
</feature>
<feature type="binding site" evidence="1">
    <location>
        <position position="22"/>
    </location>
    <ligand>
        <name>UDP-N-acetyl-alpha-D-glucosamine</name>
        <dbReference type="ChEBI" id="CHEBI:57705"/>
    </ligand>
</feature>
<feature type="binding site" evidence="1">
    <location>
        <position position="72"/>
    </location>
    <ligand>
        <name>UDP-N-acetyl-alpha-D-glucosamine</name>
        <dbReference type="ChEBI" id="CHEBI:57705"/>
    </ligand>
</feature>
<feature type="binding site" evidence="1">
    <location>
        <begin position="77"/>
        <end position="78"/>
    </location>
    <ligand>
        <name>UDP-N-acetyl-alpha-D-glucosamine</name>
        <dbReference type="ChEBI" id="CHEBI:57705"/>
    </ligand>
</feature>
<feature type="binding site" evidence="1">
    <location>
        <position position="102"/>
    </location>
    <ligand>
        <name>Mg(2+)</name>
        <dbReference type="ChEBI" id="CHEBI:18420"/>
    </ligand>
</feature>
<feature type="binding site" evidence="1">
    <location>
        <position position="139"/>
    </location>
    <ligand>
        <name>UDP-N-acetyl-alpha-D-glucosamine</name>
        <dbReference type="ChEBI" id="CHEBI:57705"/>
    </ligand>
</feature>
<feature type="binding site" evidence="1">
    <location>
        <position position="154"/>
    </location>
    <ligand>
        <name>UDP-N-acetyl-alpha-D-glucosamine</name>
        <dbReference type="ChEBI" id="CHEBI:57705"/>
    </ligand>
</feature>
<feature type="binding site" evidence="1">
    <location>
        <position position="169"/>
    </location>
    <ligand>
        <name>UDP-N-acetyl-alpha-D-glucosamine</name>
        <dbReference type="ChEBI" id="CHEBI:57705"/>
    </ligand>
</feature>
<feature type="binding site" evidence="1">
    <location>
        <position position="227"/>
    </location>
    <ligand>
        <name>Mg(2+)</name>
        <dbReference type="ChEBI" id="CHEBI:18420"/>
    </ligand>
</feature>
<feature type="binding site" evidence="1">
    <location>
        <position position="227"/>
    </location>
    <ligand>
        <name>UDP-N-acetyl-alpha-D-glucosamine</name>
        <dbReference type="ChEBI" id="CHEBI:57705"/>
    </ligand>
</feature>
<feature type="binding site" evidence="1">
    <location>
        <position position="332"/>
    </location>
    <ligand>
        <name>UDP-N-acetyl-alpha-D-glucosamine</name>
        <dbReference type="ChEBI" id="CHEBI:57705"/>
    </ligand>
</feature>
<feature type="binding site" evidence="1">
    <location>
        <position position="350"/>
    </location>
    <ligand>
        <name>UDP-N-acetyl-alpha-D-glucosamine</name>
        <dbReference type="ChEBI" id="CHEBI:57705"/>
    </ligand>
</feature>
<feature type="binding site" evidence="1">
    <location>
        <position position="365"/>
    </location>
    <ligand>
        <name>UDP-N-acetyl-alpha-D-glucosamine</name>
        <dbReference type="ChEBI" id="CHEBI:57705"/>
    </ligand>
</feature>
<feature type="binding site" evidence="1">
    <location>
        <position position="376"/>
    </location>
    <ligand>
        <name>UDP-N-acetyl-alpha-D-glucosamine</name>
        <dbReference type="ChEBI" id="CHEBI:57705"/>
    </ligand>
</feature>
<feature type="binding site" evidence="1">
    <location>
        <position position="379"/>
    </location>
    <ligand>
        <name>acetyl-CoA</name>
        <dbReference type="ChEBI" id="CHEBI:57288"/>
    </ligand>
</feature>
<feature type="binding site" evidence="1">
    <location>
        <position position="404"/>
    </location>
    <ligand>
        <name>acetyl-CoA</name>
        <dbReference type="ChEBI" id="CHEBI:57288"/>
    </ligand>
</feature>
<feature type="binding site" evidence="1">
    <location>
        <position position="422"/>
    </location>
    <ligand>
        <name>acetyl-CoA</name>
        <dbReference type="ChEBI" id="CHEBI:57288"/>
    </ligand>
</feature>
<feature type="binding site" evidence="1">
    <location>
        <position position="439"/>
    </location>
    <ligand>
        <name>acetyl-CoA</name>
        <dbReference type="ChEBI" id="CHEBI:57288"/>
    </ligand>
</feature>
<evidence type="ECO:0000255" key="1">
    <source>
        <dbReference type="HAMAP-Rule" id="MF_01631"/>
    </source>
</evidence>
<gene>
    <name evidence="1" type="primary">glmU</name>
    <name type="ordered locus">llmg_2076</name>
</gene>
<name>GLMU_LACLM</name>
<protein>
    <recommendedName>
        <fullName evidence="1">Bifunctional protein GlmU</fullName>
    </recommendedName>
    <domain>
        <recommendedName>
            <fullName evidence="1">UDP-N-acetylglucosamine pyrophosphorylase</fullName>
            <ecNumber evidence="1">2.7.7.23</ecNumber>
        </recommendedName>
        <alternativeName>
            <fullName evidence="1">N-acetylglucosamine-1-phosphate uridyltransferase</fullName>
        </alternativeName>
    </domain>
    <domain>
        <recommendedName>
            <fullName evidence="1">Glucosamine-1-phosphate N-acetyltransferase</fullName>
            <ecNumber evidence="1">2.3.1.157</ecNumber>
        </recommendedName>
    </domain>
</protein>
<organism>
    <name type="scientific">Lactococcus lactis subsp. cremoris (strain MG1363)</name>
    <dbReference type="NCBI Taxonomy" id="416870"/>
    <lineage>
        <taxon>Bacteria</taxon>
        <taxon>Bacillati</taxon>
        <taxon>Bacillota</taxon>
        <taxon>Bacilli</taxon>
        <taxon>Lactobacillales</taxon>
        <taxon>Streptococcaceae</taxon>
        <taxon>Lactococcus</taxon>
        <taxon>Lactococcus cremoris subsp. cremoris</taxon>
    </lineage>
</organism>
<dbReference type="EC" id="2.7.7.23" evidence="1"/>
<dbReference type="EC" id="2.3.1.157" evidence="1"/>
<dbReference type="EMBL" id="AM406671">
    <property type="protein sequence ID" value="CAL98643.1"/>
    <property type="molecule type" value="Genomic_DNA"/>
</dbReference>
<dbReference type="RefSeq" id="WP_011835789.1">
    <property type="nucleotide sequence ID" value="NC_009004.1"/>
</dbReference>
<dbReference type="SMR" id="A2RMV7"/>
<dbReference type="STRING" id="416870.llmg_2076"/>
<dbReference type="KEGG" id="llm:llmg_2076"/>
<dbReference type="eggNOG" id="COG1207">
    <property type="taxonomic scope" value="Bacteria"/>
</dbReference>
<dbReference type="HOGENOM" id="CLU_029499_15_2_9"/>
<dbReference type="OrthoDB" id="9775031at2"/>
<dbReference type="PhylomeDB" id="A2RMV7"/>
<dbReference type="UniPathway" id="UPA00113">
    <property type="reaction ID" value="UER00532"/>
</dbReference>
<dbReference type="UniPathway" id="UPA00113">
    <property type="reaction ID" value="UER00533"/>
</dbReference>
<dbReference type="UniPathway" id="UPA00973"/>
<dbReference type="Proteomes" id="UP000000364">
    <property type="component" value="Chromosome"/>
</dbReference>
<dbReference type="GO" id="GO:0005737">
    <property type="term" value="C:cytoplasm"/>
    <property type="evidence" value="ECO:0007669"/>
    <property type="project" value="UniProtKB-SubCell"/>
</dbReference>
<dbReference type="GO" id="GO:0016020">
    <property type="term" value="C:membrane"/>
    <property type="evidence" value="ECO:0007669"/>
    <property type="project" value="GOC"/>
</dbReference>
<dbReference type="GO" id="GO:0019134">
    <property type="term" value="F:glucosamine-1-phosphate N-acetyltransferase activity"/>
    <property type="evidence" value="ECO:0007669"/>
    <property type="project" value="UniProtKB-UniRule"/>
</dbReference>
<dbReference type="GO" id="GO:0000287">
    <property type="term" value="F:magnesium ion binding"/>
    <property type="evidence" value="ECO:0007669"/>
    <property type="project" value="UniProtKB-UniRule"/>
</dbReference>
<dbReference type="GO" id="GO:0003977">
    <property type="term" value="F:UDP-N-acetylglucosamine diphosphorylase activity"/>
    <property type="evidence" value="ECO:0007669"/>
    <property type="project" value="UniProtKB-UniRule"/>
</dbReference>
<dbReference type="GO" id="GO:0000902">
    <property type="term" value="P:cell morphogenesis"/>
    <property type="evidence" value="ECO:0007669"/>
    <property type="project" value="UniProtKB-UniRule"/>
</dbReference>
<dbReference type="GO" id="GO:0071555">
    <property type="term" value="P:cell wall organization"/>
    <property type="evidence" value="ECO:0007669"/>
    <property type="project" value="UniProtKB-KW"/>
</dbReference>
<dbReference type="GO" id="GO:0009245">
    <property type="term" value="P:lipid A biosynthetic process"/>
    <property type="evidence" value="ECO:0007669"/>
    <property type="project" value="UniProtKB-UniRule"/>
</dbReference>
<dbReference type="GO" id="GO:0009252">
    <property type="term" value="P:peptidoglycan biosynthetic process"/>
    <property type="evidence" value="ECO:0007669"/>
    <property type="project" value="UniProtKB-UniRule"/>
</dbReference>
<dbReference type="GO" id="GO:0008360">
    <property type="term" value="P:regulation of cell shape"/>
    <property type="evidence" value="ECO:0007669"/>
    <property type="project" value="UniProtKB-KW"/>
</dbReference>
<dbReference type="GO" id="GO:0006048">
    <property type="term" value="P:UDP-N-acetylglucosamine biosynthetic process"/>
    <property type="evidence" value="ECO:0007669"/>
    <property type="project" value="UniProtKB-UniPathway"/>
</dbReference>
<dbReference type="CDD" id="cd02540">
    <property type="entry name" value="GT2_GlmU_N_bac"/>
    <property type="match status" value="1"/>
</dbReference>
<dbReference type="CDD" id="cd03353">
    <property type="entry name" value="LbH_GlmU_C"/>
    <property type="match status" value="1"/>
</dbReference>
<dbReference type="Gene3D" id="2.160.10.10">
    <property type="entry name" value="Hexapeptide repeat proteins"/>
    <property type="match status" value="1"/>
</dbReference>
<dbReference type="Gene3D" id="3.90.550.10">
    <property type="entry name" value="Spore Coat Polysaccharide Biosynthesis Protein SpsA, Chain A"/>
    <property type="match status" value="1"/>
</dbReference>
<dbReference type="HAMAP" id="MF_01631">
    <property type="entry name" value="GlmU"/>
    <property type="match status" value="1"/>
</dbReference>
<dbReference type="InterPro" id="IPR005882">
    <property type="entry name" value="Bifunctional_GlmU"/>
</dbReference>
<dbReference type="InterPro" id="IPR050065">
    <property type="entry name" value="GlmU-like"/>
</dbReference>
<dbReference type="InterPro" id="IPR038009">
    <property type="entry name" value="GlmU_C_LbH"/>
</dbReference>
<dbReference type="InterPro" id="IPR005835">
    <property type="entry name" value="NTP_transferase_dom"/>
</dbReference>
<dbReference type="InterPro" id="IPR029044">
    <property type="entry name" value="Nucleotide-diphossugar_trans"/>
</dbReference>
<dbReference type="InterPro" id="IPR011004">
    <property type="entry name" value="Trimer_LpxA-like_sf"/>
</dbReference>
<dbReference type="NCBIfam" id="TIGR01173">
    <property type="entry name" value="glmU"/>
    <property type="match status" value="1"/>
</dbReference>
<dbReference type="NCBIfam" id="NF010934">
    <property type="entry name" value="PRK14354.1"/>
    <property type="match status" value="1"/>
</dbReference>
<dbReference type="PANTHER" id="PTHR43584:SF3">
    <property type="entry name" value="BIFUNCTIONAL PROTEIN GLMU"/>
    <property type="match status" value="1"/>
</dbReference>
<dbReference type="PANTHER" id="PTHR43584">
    <property type="entry name" value="NUCLEOTIDYL TRANSFERASE"/>
    <property type="match status" value="1"/>
</dbReference>
<dbReference type="Pfam" id="PF00483">
    <property type="entry name" value="NTP_transferase"/>
    <property type="match status" value="1"/>
</dbReference>
<dbReference type="SUPFAM" id="SSF53448">
    <property type="entry name" value="Nucleotide-diphospho-sugar transferases"/>
    <property type="match status" value="1"/>
</dbReference>
<dbReference type="SUPFAM" id="SSF51161">
    <property type="entry name" value="Trimeric LpxA-like enzymes"/>
    <property type="match status" value="1"/>
</dbReference>
<keyword id="KW-0012">Acyltransferase</keyword>
<keyword id="KW-0133">Cell shape</keyword>
<keyword id="KW-0961">Cell wall biogenesis/degradation</keyword>
<keyword id="KW-0963">Cytoplasm</keyword>
<keyword id="KW-0460">Magnesium</keyword>
<keyword id="KW-0479">Metal-binding</keyword>
<keyword id="KW-0511">Multifunctional enzyme</keyword>
<keyword id="KW-0548">Nucleotidyltransferase</keyword>
<keyword id="KW-0573">Peptidoglycan synthesis</keyword>
<keyword id="KW-0677">Repeat</keyword>
<keyword id="KW-0808">Transferase</keyword>
<accession>A2RMV7</accession>
<reference key="1">
    <citation type="journal article" date="2007" name="J. Bacteriol.">
        <title>The complete genome sequence of the lactic acid bacterial paradigm Lactococcus lactis subsp. cremoris MG1363.</title>
        <authorList>
            <person name="Wegmann U."/>
            <person name="O'Connell-Motherway M."/>
            <person name="Zomer A."/>
            <person name="Buist G."/>
            <person name="Shearman C."/>
            <person name="Canchaya C."/>
            <person name="Ventura M."/>
            <person name="Goesmann A."/>
            <person name="Gasson M.J."/>
            <person name="Kuipers O.P."/>
            <person name="van Sinderen D."/>
            <person name="Kok J."/>
        </authorList>
    </citation>
    <scope>NUCLEOTIDE SEQUENCE [LARGE SCALE GENOMIC DNA]</scope>
    <source>
        <strain>MG1363</strain>
    </source>
</reference>
<comment type="function">
    <text evidence="1">Catalyzes the last two sequential reactions in the de novo biosynthetic pathway for UDP-N-acetylglucosamine (UDP-GlcNAc). The C-terminal domain catalyzes the transfer of acetyl group from acetyl coenzyme A to glucosamine-1-phosphate (GlcN-1-P) to produce N-acetylglucosamine-1-phosphate (GlcNAc-1-P), which is converted into UDP-GlcNAc by the transfer of uridine 5-monophosphate (from uridine 5-triphosphate), a reaction catalyzed by the N-terminal domain.</text>
</comment>
<comment type="catalytic activity">
    <reaction evidence="1">
        <text>alpha-D-glucosamine 1-phosphate + acetyl-CoA = N-acetyl-alpha-D-glucosamine 1-phosphate + CoA + H(+)</text>
        <dbReference type="Rhea" id="RHEA:13725"/>
        <dbReference type="ChEBI" id="CHEBI:15378"/>
        <dbReference type="ChEBI" id="CHEBI:57287"/>
        <dbReference type="ChEBI" id="CHEBI:57288"/>
        <dbReference type="ChEBI" id="CHEBI:57776"/>
        <dbReference type="ChEBI" id="CHEBI:58516"/>
        <dbReference type="EC" id="2.3.1.157"/>
    </reaction>
</comment>
<comment type="catalytic activity">
    <reaction evidence="1">
        <text>N-acetyl-alpha-D-glucosamine 1-phosphate + UTP + H(+) = UDP-N-acetyl-alpha-D-glucosamine + diphosphate</text>
        <dbReference type="Rhea" id="RHEA:13509"/>
        <dbReference type="ChEBI" id="CHEBI:15378"/>
        <dbReference type="ChEBI" id="CHEBI:33019"/>
        <dbReference type="ChEBI" id="CHEBI:46398"/>
        <dbReference type="ChEBI" id="CHEBI:57705"/>
        <dbReference type="ChEBI" id="CHEBI:57776"/>
        <dbReference type="EC" id="2.7.7.23"/>
    </reaction>
</comment>
<comment type="cofactor">
    <cofactor evidence="1">
        <name>Mg(2+)</name>
        <dbReference type="ChEBI" id="CHEBI:18420"/>
    </cofactor>
    <text evidence="1">Binds 1 Mg(2+) ion per subunit.</text>
</comment>
<comment type="pathway">
    <text evidence="1">Nucleotide-sugar biosynthesis; UDP-N-acetyl-alpha-D-glucosamine biosynthesis; N-acetyl-alpha-D-glucosamine 1-phosphate from alpha-D-glucosamine 6-phosphate (route II): step 2/2.</text>
</comment>
<comment type="pathway">
    <text evidence="1">Nucleotide-sugar biosynthesis; UDP-N-acetyl-alpha-D-glucosamine biosynthesis; UDP-N-acetyl-alpha-D-glucosamine from N-acetyl-alpha-D-glucosamine 1-phosphate: step 1/1.</text>
</comment>
<comment type="pathway">
    <text evidence="1">Bacterial outer membrane biogenesis; LPS lipid A biosynthesis.</text>
</comment>
<comment type="subunit">
    <text evidence="1">Homotrimer.</text>
</comment>
<comment type="subcellular location">
    <subcellularLocation>
        <location evidence="1">Cytoplasm</location>
    </subcellularLocation>
</comment>
<comment type="similarity">
    <text evidence="1">In the N-terminal section; belongs to the N-acetylglucosamine-1-phosphate uridyltransferase family.</text>
</comment>
<comment type="similarity">
    <text evidence="1">In the C-terminal section; belongs to the transferase hexapeptide repeat family.</text>
</comment>